<reference key="1">
    <citation type="submission" date="2009-02" db="EMBL/GenBank/DDBJ databases">
        <title>The genome sequence of Ajellomyces capsulatus strain G186AR.</title>
        <authorList>
            <person name="Champion M."/>
            <person name="Cuomo C.A."/>
            <person name="Ma L.-J."/>
            <person name="Henn M.R."/>
            <person name="Sil A."/>
            <person name="Goldman B."/>
            <person name="Young S.K."/>
            <person name="Kodira C.D."/>
            <person name="Zeng Q."/>
            <person name="Koehrsen M."/>
            <person name="Alvarado L."/>
            <person name="Berlin A."/>
            <person name="Borenstein D."/>
            <person name="Chen Z."/>
            <person name="Engels R."/>
            <person name="Freedman E."/>
            <person name="Gellesch M."/>
            <person name="Goldberg J."/>
            <person name="Griggs A."/>
            <person name="Gujja S."/>
            <person name="Heiman D."/>
            <person name="Hepburn T."/>
            <person name="Howarth C."/>
            <person name="Jen D."/>
            <person name="Larson L."/>
            <person name="Lewis B."/>
            <person name="Mehta T."/>
            <person name="Park D."/>
            <person name="Pearson M."/>
            <person name="Roberts A."/>
            <person name="Saif S."/>
            <person name="Shea T."/>
            <person name="Shenoy N."/>
            <person name="Sisk P."/>
            <person name="Stolte C."/>
            <person name="Sykes S."/>
            <person name="Walk T."/>
            <person name="White J."/>
            <person name="Yandava C."/>
            <person name="Klein B."/>
            <person name="McEwen J.G."/>
            <person name="Puccia R."/>
            <person name="Goldman G.H."/>
            <person name="Felipe M.S."/>
            <person name="Nino-Vega G."/>
            <person name="San-Blas G."/>
            <person name="Taylor J."/>
            <person name="Mendoza L."/>
            <person name="Galagan J.E."/>
            <person name="Nusbaum C."/>
            <person name="Birren B.W."/>
        </authorList>
    </citation>
    <scope>NUCLEOTIDE SEQUENCE [LARGE SCALE GENOMIC DNA]</scope>
    <source>
        <strain>G186AR / H82 / ATCC MYA-2454 / RMSCC 2432</strain>
    </source>
</reference>
<accession>C0NF00</accession>
<keyword id="KW-0256">Endoplasmic reticulum</keyword>
<keyword id="KW-0445">Lipid transport</keyword>
<keyword id="KW-0446">Lipid-binding</keyword>
<keyword id="KW-0472">Membrane</keyword>
<keyword id="KW-0496">Mitochondrion</keyword>
<keyword id="KW-1000">Mitochondrion outer membrane</keyword>
<keyword id="KW-1185">Reference proteome</keyword>
<keyword id="KW-0813">Transport</keyword>
<protein>
    <recommendedName>
        <fullName evidence="1">Mitochondrial distribution and morphology protein 12</fullName>
    </recommendedName>
    <alternativeName>
        <fullName evidence="1">Mitochondrial inheritance component MDM12</fullName>
    </alternativeName>
</protein>
<evidence type="ECO:0000255" key="1">
    <source>
        <dbReference type="HAMAP-Rule" id="MF_03104"/>
    </source>
</evidence>
<evidence type="ECO:0000256" key="2">
    <source>
        <dbReference type="SAM" id="MobiDB-lite"/>
    </source>
</evidence>
<proteinExistence type="inferred from homology"/>
<gene>
    <name evidence="1" type="primary">MDM12</name>
    <name type="ORF">HCBG_01466</name>
</gene>
<organism>
    <name type="scientific">Ajellomyces capsulatus (strain G186AR / H82 / ATCC MYA-2454 / RMSCC 2432)</name>
    <name type="common">Darling's disease fungus</name>
    <name type="synonym">Histoplasma capsulatum</name>
    <dbReference type="NCBI Taxonomy" id="447093"/>
    <lineage>
        <taxon>Eukaryota</taxon>
        <taxon>Fungi</taxon>
        <taxon>Dikarya</taxon>
        <taxon>Ascomycota</taxon>
        <taxon>Pezizomycotina</taxon>
        <taxon>Eurotiomycetes</taxon>
        <taxon>Eurotiomycetidae</taxon>
        <taxon>Onygenales</taxon>
        <taxon>Ajellomycetaceae</taxon>
        <taxon>Histoplasma</taxon>
    </lineage>
</organism>
<name>MDM12_AJECG</name>
<feature type="chain" id="PRO_0000384263" description="Mitochondrial distribution and morphology protein 12">
    <location>
        <begin position="1"/>
        <end position="430"/>
    </location>
</feature>
<feature type="domain" description="SMP-LTD" evidence="1">
    <location>
        <begin position="1"/>
        <end position="430"/>
    </location>
</feature>
<feature type="region of interest" description="Disordered" evidence="2">
    <location>
        <begin position="61"/>
        <end position="117"/>
    </location>
</feature>
<feature type="region of interest" description="Disordered" evidence="2">
    <location>
        <begin position="177"/>
        <end position="276"/>
    </location>
</feature>
<feature type="region of interest" description="Disordered" evidence="2">
    <location>
        <begin position="352"/>
        <end position="377"/>
    </location>
</feature>
<feature type="compositionally biased region" description="Acidic residues" evidence="2">
    <location>
        <begin position="69"/>
        <end position="82"/>
    </location>
</feature>
<feature type="compositionally biased region" description="Basic and acidic residues" evidence="2">
    <location>
        <begin position="85"/>
        <end position="96"/>
    </location>
</feature>
<feature type="compositionally biased region" description="Polar residues" evidence="2">
    <location>
        <begin position="211"/>
        <end position="233"/>
    </location>
</feature>
<feature type="compositionally biased region" description="Polar residues" evidence="2">
    <location>
        <begin position="241"/>
        <end position="251"/>
    </location>
</feature>
<feature type="compositionally biased region" description="Basic and acidic residues" evidence="2">
    <location>
        <begin position="265"/>
        <end position="276"/>
    </location>
</feature>
<comment type="function">
    <text evidence="1">Component of the ERMES/MDM complex, which serves as a molecular tether to connect the endoplasmic reticulum (ER) and mitochondria. Components of this complex are involved in the control of mitochondrial shape and protein biogenesis, and function in nonvesicular lipid trafficking between the ER and mitochondria. MDM12 is required for the interaction of the ER-resident membrane protein MMM1 and the outer mitochondrial membrane-resident beta-barrel protein MDM10. The MDM12-MMM1 subcomplex functions in the major beta-barrel assembly pathway that is responsible for biogenesis of all mitochondrial outer membrane beta-barrel proteins, and acts in a late step after the SAM complex. The MDM10-MDM12-MMM1 subcomplex further acts in the TOM40-specific pathway after the action of the MDM12-MMM1 complex. Essential for establishing and maintaining the structure of mitochondria and maintenance of mtDNA nucleoids.</text>
</comment>
<comment type="subunit">
    <text evidence="1">Component of the ER-mitochondria encounter structure (ERMES) or MDM complex, composed of MMM1, MDM10, MDM12 and MDM34. A MMM1 homodimer associates with one molecule of MDM12 on each side in a pairwise head-to-tail manner, and the SMP-LTD domains of MMM1 and MDM12 generate a continuous hydrophobic tunnel for phospholipid trafficking.</text>
</comment>
<comment type="subcellular location">
    <subcellularLocation>
        <location evidence="1">Mitochondrion outer membrane</location>
        <topology evidence="1">Peripheral membrane protein</topology>
        <orientation evidence="1">Cytoplasmic side</orientation>
    </subcellularLocation>
    <subcellularLocation>
        <location evidence="1">Endoplasmic reticulum membrane</location>
        <topology evidence="1">Peripheral membrane protein</topology>
        <orientation evidence="1">Cytoplasmic side</orientation>
    </subcellularLocation>
    <text evidence="1">The ERMES/MDM complex localizes to a few discrete foci (around 10 per single cell), that represent mitochondria-endoplasmic reticulum junctions. These foci are often found next to mtDNA nucleoids.</text>
</comment>
<comment type="domain">
    <text evidence="1">The SMP-LTD domain is a barrel-like domain that can bind various types of glycerophospholipids in its interior and mediate their transfer between two adjacent bilayers.</text>
</comment>
<comment type="similarity">
    <text evidence="1">Belongs to the MDM12 family.</text>
</comment>
<dbReference type="EMBL" id="GG663364">
    <property type="protein sequence ID" value="EEH09821.1"/>
    <property type="molecule type" value="Genomic_DNA"/>
</dbReference>
<dbReference type="SMR" id="C0NF00"/>
<dbReference type="FunCoup" id="C0NF00">
    <property type="interactions" value="42"/>
</dbReference>
<dbReference type="STRING" id="447093.C0NF00"/>
<dbReference type="HOGENOM" id="CLU_026794_0_0_1"/>
<dbReference type="InParanoid" id="C0NF00"/>
<dbReference type="Proteomes" id="UP000001631">
    <property type="component" value="Unassembled WGS sequence"/>
</dbReference>
<dbReference type="GO" id="GO:0005789">
    <property type="term" value="C:endoplasmic reticulum membrane"/>
    <property type="evidence" value="ECO:0007669"/>
    <property type="project" value="UniProtKB-SubCell"/>
</dbReference>
<dbReference type="GO" id="GO:0032865">
    <property type="term" value="C:ERMES complex"/>
    <property type="evidence" value="ECO:0007669"/>
    <property type="project" value="UniProtKB-UniRule"/>
</dbReference>
<dbReference type="GO" id="GO:0008289">
    <property type="term" value="F:lipid binding"/>
    <property type="evidence" value="ECO:0007669"/>
    <property type="project" value="UniProtKB-KW"/>
</dbReference>
<dbReference type="GO" id="GO:0000002">
    <property type="term" value="P:mitochondrial genome maintenance"/>
    <property type="evidence" value="ECO:0007669"/>
    <property type="project" value="UniProtKB-UniRule"/>
</dbReference>
<dbReference type="GO" id="GO:1990456">
    <property type="term" value="P:mitochondrion-endoplasmic reticulum membrane tethering"/>
    <property type="evidence" value="ECO:0007669"/>
    <property type="project" value="TreeGrafter"/>
</dbReference>
<dbReference type="GO" id="GO:0015914">
    <property type="term" value="P:phospholipid transport"/>
    <property type="evidence" value="ECO:0007669"/>
    <property type="project" value="TreeGrafter"/>
</dbReference>
<dbReference type="GO" id="GO:0045040">
    <property type="term" value="P:protein insertion into mitochondrial outer membrane"/>
    <property type="evidence" value="ECO:0007669"/>
    <property type="project" value="UniProtKB-UniRule"/>
</dbReference>
<dbReference type="CDD" id="cd21672">
    <property type="entry name" value="SMP_Mdm12"/>
    <property type="match status" value="1"/>
</dbReference>
<dbReference type="HAMAP" id="MF_03104">
    <property type="entry name" value="Mdm12"/>
    <property type="match status" value="1"/>
</dbReference>
<dbReference type="InterPro" id="IPR027532">
    <property type="entry name" value="Mdm12"/>
</dbReference>
<dbReference type="InterPro" id="IPR031468">
    <property type="entry name" value="SMP_LBD"/>
</dbReference>
<dbReference type="PANTHER" id="PTHR28204">
    <property type="entry name" value="MITOCHONDRIAL DISTRIBUTION AND MORPHOLOGY PROTEIN 12"/>
    <property type="match status" value="1"/>
</dbReference>
<dbReference type="PANTHER" id="PTHR28204:SF1">
    <property type="entry name" value="MITOCHONDRIAL DISTRIBUTION AND MORPHOLOGY PROTEIN 12"/>
    <property type="match status" value="1"/>
</dbReference>
<dbReference type="PROSITE" id="PS51847">
    <property type="entry name" value="SMP"/>
    <property type="match status" value="1"/>
</dbReference>
<sequence>MSIDIDWERATSGPDGELLAERIRSFIHDKFQQIVLPRFIRSVQVTSFNFGTIPPELEIRDLSDPFPDFYEDDDENFSDSSEEGSPTREPVDRYGNRVDSWQANSPGGPGGQMYESNQPLRMPAWEEHTGISPLRGPMNFGDINPYLFPRSGTPGIPGGTSNLGYYMPLSGLSSSQTPLGAVARGNPFSGGWPDAHGARPSRRRSEAEPDSAQSRPSTANTGNTLPSRDSMSISDPHHSHASQGMPNNQGQALEPNIPPTSPNHPLDDTPPRRMREQKAEDFQVFCRTKYAGNISLSLTAEILLDYPMPSFVGLPLKLNITGLTFDAVAVIAYIRRRIHFCFLSPEDADTLMGPETAGGGGGGDTSEPNSSRRKPSSLLREIRVESEIGRKENGKQALKNVGKLEKFVLEQVRRIFEEEFVYPSFWTFLI</sequence>